<accession>Q1ELU3</accession>
<organism>
    <name type="scientific">Lachesana tarabaevi</name>
    <name type="common">Spider</name>
    <dbReference type="NCBI Taxonomy" id="379576"/>
    <lineage>
        <taxon>Eukaryota</taxon>
        <taxon>Metazoa</taxon>
        <taxon>Ecdysozoa</taxon>
        <taxon>Arthropoda</taxon>
        <taxon>Chelicerata</taxon>
        <taxon>Arachnida</taxon>
        <taxon>Araneae</taxon>
        <taxon>Araneomorphae</taxon>
        <taxon>Entelegynae</taxon>
        <taxon>Entelegynae incertae sedis</taxon>
        <taxon>Zodariidae</taxon>
        <taxon>Lachesana</taxon>
    </lineage>
</organism>
<keyword id="KW-0027">Amidation</keyword>
<keyword id="KW-0044">Antibiotic</keyword>
<keyword id="KW-0929">Antimicrobial</keyword>
<keyword id="KW-0903">Direct protein sequencing</keyword>
<keyword id="KW-0295">Fungicide</keyword>
<keyword id="KW-0472">Membrane</keyword>
<keyword id="KW-0964">Secreted</keyword>
<keyword id="KW-0732">Signal</keyword>
<keyword id="KW-1052">Target cell membrane</keyword>
<keyword id="KW-1053">Target membrane</keyword>
<keyword id="KW-0800">Toxin</keyword>
<proteinExistence type="evidence at protein level"/>
<feature type="signal peptide" evidence="1">
    <location>
        <begin position="1"/>
        <end position="22"/>
    </location>
</feature>
<feature type="propeptide" id="PRO_0000249740" evidence="1 2 3">
    <location>
        <begin position="23"/>
        <end position="61"/>
    </location>
</feature>
<feature type="peptide" id="PRO_0000249741" description="M-zodatoxin-Lt3a" evidence="2 3">
    <location>
        <begin position="62"/>
        <end position="81"/>
    </location>
</feature>
<feature type="short sequence motif" description="Processing quadruplet motif" evidence="6">
    <location>
        <begin position="58"/>
        <end position="61"/>
    </location>
</feature>
<feature type="modified residue" description="Alanine amide" evidence="2 3">
    <location>
        <position position="81"/>
    </location>
</feature>
<evidence type="ECO:0000255" key="1"/>
<evidence type="ECO:0000269" key="2">
    <source>
    </source>
</evidence>
<evidence type="ECO:0000269" key="3">
    <source>
    </source>
</evidence>
<evidence type="ECO:0000269" key="4">
    <source>
    </source>
</evidence>
<evidence type="ECO:0000303" key="5">
    <source>
    </source>
</evidence>
<evidence type="ECO:0000303" key="6">
    <source>
    </source>
</evidence>
<evidence type="ECO:0000303" key="7">
    <source>
    </source>
</evidence>
<evidence type="ECO:0000305" key="8"/>
<evidence type="ECO:0000305" key="9">
    <source>
    </source>
</evidence>
<dbReference type="EMBL" id="AM232696">
    <property type="protein sequence ID" value="CAJ81656.1"/>
    <property type="molecule type" value="mRNA"/>
</dbReference>
<dbReference type="SMR" id="Q1ELU3"/>
<dbReference type="ArachnoServer" id="AS000052">
    <property type="toxin name" value="M-zodatoxin-Lt3a"/>
</dbReference>
<dbReference type="GO" id="GO:0005576">
    <property type="term" value="C:extracellular region"/>
    <property type="evidence" value="ECO:0007669"/>
    <property type="project" value="UniProtKB-SubCell"/>
</dbReference>
<dbReference type="GO" id="GO:0016020">
    <property type="term" value="C:membrane"/>
    <property type="evidence" value="ECO:0007669"/>
    <property type="project" value="UniProtKB-KW"/>
</dbReference>
<dbReference type="GO" id="GO:0044218">
    <property type="term" value="C:other organism cell membrane"/>
    <property type="evidence" value="ECO:0007669"/>
    <property type="project" value="UniProtKB-KW"/>
</dbReference>
<dbReference type="GO" id="GO:0090729">
    <property type="term" value="F:toxin activity"/>
    <property type="evidence" value="ECO:0007669"/>
    <property type="project" value="UniProtKB-KW"/>
</dbReference>
<dbReference type="GO" id="GO:0042742">
    <property type="term" value="P:defense response to bacterium"/>
    <property type="evidence" value="ECO:0007669"/>
    <property type="project" value="UniProtKB-KW"/>
</dbReference>
<dbReference type="GO" id="GO:0050832">
    <property type="term" value="P:defense response to fungus"/>
    <property type="evidence" value="ECO:0007669"/>
    <property type="project" value="UniProtKB-KW"/>
</dbReference>
<dbReference type="GO" id="GO:0031640">
    <property type="term" value="P:killing of cells of another organism"/>
    <property type="evidence" value="ECO:0007669"/>
    <property type="project" value="UniProtKB-KW"/>
</dbReference>
<dbReference type="InterPro" id="IPR018802">
    <property type="entry name" value="Latarcin_precursor"/>
</dbReference>
<dbReference type="Pfam" id="PF10279">
    <property type="entry name" value="Latarcin"/>
    <property type="match status" value="1"/>
</dbReference>
<sequence>MKTYAVLLALVVAFVCIAESTGYPVEDLEDDELTELEAEALLEDLLEDLELEDLDYNEEARSWKSMAKKLKEYMEKLKQRAG</sequence>
<reference key="1">
    <citation type="journal article" date="2006" name="J. Biol. Chem.">
        <title>Latarcins, antimicrobial and cytolytic peptides from the venom of the spider Lachesana tarabaevi (Zodariidae) that exemplify biomolecular diversity.</title>
        <authorList>
            <person name="Kozlov S.A."/>
            <person name="Vassilevski A.A."/>
            <person name="Feofanov A.V."/>
            <person name="Surovoy A.Y."/>
            <person name="Karpunin D.V."/>
            <person name="Grishin E.V."/>
        </authorList>
    </citation>
    <scope>NUCLEOTIDE SEQUENCE [MRNA]</scope>
    <scope>PROTEIN SEQUENCE OF 62-81</scope>
    <scope>SYNTHESIS OF 62-81</scope>
    <scope>AMIDATION AT ALA-81</scope>
    <scope>FUNCTION</scope>
    <scope>SUBCELLULAR LOCATION</scope>
    <scope>DOMAIN</scope>
    <scope>MASS SPECTROMETRY</scope>
    <source>
        <tissue>Venom</tissue>
        <tissue>Venom gland</tissue>
    </source>
</reference>
<reference key="2">
    <citation type="journal article" date="2013" name="J. Antibiot.">
        <title>Antimicrobial peptides from arachnid venoms and their microbicidal activity in the presence of commercial antibiotics.</title>
        <authorList>
            <person name="Garcia F."/>
            <person name="Villegas E."/>
            <person name="Espino-Solis G.P."/>
            <person name="Rodriguez A."/>
            <person name="Paniagua-Solis J.F."/>
            <person name="Sandoval-Lopez G."/>
            <person name="Possani L.D."/>
            <person name="Corzo G."/>
        </authorList>
    </citation>
    <scope>PROTEIN SEQUENCE OF 62-81</scope>
    <scope>MASS SPECTROMETRY</scope>
    <scope>FUNCTION</scope>
    <scope>SUBCELLULAR LOCATION</scope>
    <scope>CIRCULAR DICHROISM</scope>
    <source>
        <tissue>Venom</tissue>
    </source>
</reference>
<reference key="3">
    <citation type="journal article" date="2016" name="Biochem. J.">
        <title>Lachesana tarabaevi, an expert in membrane-active toxins.</title>
        <authorList>
            <person name="Kuzmenkov A.I."/>
            <person name="Sachkova M.Y."/>
            <person name="Kovalchuk S.I."/>
            <person name="Grishin E.V."/>
            <person name="Vassilevski A.A."/>
        </authorList>
    </citation>
    <scope>SUBCELLULAR LOCATION</scope>
    <scope>PQM MOTIF</scope>
    <scope>MASS SPECTROMETRY</scope>
    <scope>AMIDATION AT ALA-81</scope>
    <source>
        <tissue>Venom</tissue>
    </source>
</reference>
<name>LAT3A_LACTA</name>
<protein>
    <recommendedName>
        <fullName evidence="8">M-zodatoxin-Lt3a</fullName>
        <shortName evidence="8">M-ZDTX-Lt3a</shortName>
    </recommendedName>
    <alternativeName>
        <fullName>La47</fullName>
    </alternativeName>
    <alternativeName>
        <fullName evidence="5">Latarcin-3a</fullName>
        <shortName evidence="5">Ltc-3a</shortName>
    </alternativeName>
</protein>
<comment type="function">
    <text evidence="2 3">It has antimicrobial activity against Gram-positive bacteria (A.globiformis VKM Ac-1112 (MIC=0.3 uM), and B.subtilis VKM B-501 (MIC=1.2 uM)), Gram-negative bacteria (E.coli DH5-alpha (MIC=2.5 uM), E.coli MH1 (MIC=6.0 uM), and P.aeruginosa PAO1 (MIC&gt;40 uM)), and yeasts (P.pastoris GS115 (MIC=20 uM), and S.cerevisiae Y190 (MIC=20 uM)). Causes paralysis, but is not lethal when injected into insect (M.domestica) larvae (PubMed:16735513). A second study reports antibacterial activity against E.coli (MIC=100 uM) and S.aureus (MIC=84 uM). Furthermore, increases efficacy of antibiotics (chloramphenicol, streptomycin, kanamycin, novobiocin) when tested against E.coli, probably by facilitating their incorporation into the bacteria (PubMed:23093034).</text>
</comment>
<comment type="subcellular location">
    <subcellularLocation>
        <location evidence="2 3 4">Secreted</location>
    </subcellularLocation>
    <subcellularLocation>
        <location evidence="9">Target cell membrane</location>
    </subcellularLocation>
    <text evidence="9">Forms a helical membrane channel in the prey.</text>
</comment>
<comment type="tissue specificity">
    <text evidence="9">Expressed by the venom gland.</text>
</comment>
<comment type="domain">
    <text evidence="5">The mature peptide (62-81) probably forms alpha-helices which disrupt target cell membranes.</text>
</comment>
<comment type="PTM">
    <text evidence="7">Cleavage of the propeptide depends on the processing quadruplet motif (XXXR, with at least one of X being E).</text>
</comment>
<comment type="mass spectrometry"/>
<comment type="mass spectrometry"/>
<comment type="mass spectrometry"/>
<comment type="miscellaneous">
    <text evidence="2 3">Negative results: does not have hemolytic activity against rabbit and human erythrocytes.</text>
</comment>
<comment type="similarity">
    <text evidence="8">Belongs to the cationic peptide 03 (latarcin) family. 03 subfamily.</text>
</comment>
<comment type="caution">
    <text evidence="8">PubMed:23093034 describes a peptide from Lachesana sp. Since the sequence is identical with a peptide from L.tarabaevi and the genus is the same, it is probable that the peptide is from this species.</text>
</comment>